<organism>
    <name type="scientific">Shewanella loihica (strain ATCC BAA-1088 / PV-4)</name>
    <dbReference type="NCBI Taxonomy" id="323850"/>
    <lineage>
        <taxon>Bacteria</taxon>
        <taxon>Pseudomonadati</taxon>
        <taxon>Pseudomonadota</taxon>
        <taxon>Gammaproteobacteria</taxon>
        <taxon>Alteromonadales</taxon>
        <taxon>Shewanellaceae</taxon>
        <taxon>Shewanella</taxon>
    </lineage>
</organism>
<keyword id="KW-1185">Reference proteome</keyword>
<keyword id="KW-0687">Ribonucleoprotein</keyword>
<keyword id="KW-0689">Ribosomal protein</keyword>
<keyword id="KW-0694">RNA-binding</keyword>
<keyword id="KW-0699">rRNA-binding</keyword>
<protein>
    <recommendedName>
        <fullName evidence="1">Large ribosomal subunit protein bL9</fullName>
    </recommendedName>
    <alternativeName>
        <fullName evidence="2">50S ribosomal protein L9</fullName>
    </alternativeName>
</protein>
<evidence type="ECO:0000255" key="1">
    <source>
        <dbReference type="HAMAP-Rule" id="MF_00503"/>
    </source>
</evidence>
<evidence type="ECO:0000305" key="2"/>
<feature type="chain" id="PRO_1000014859" description="Large ribosomal subunit protein bL9">
    <location>
        <begin position="1"/>
        <end position="150"/>
    </location>
</feature>
<dbReference type="EMBL" id="CP000606">
    <property type="protein sequence ID" value="ABO25147.1"/>
    <property type="molecule type" value="Genomic_DNA"/>
</dbReference>
<dbReference type="RefSeq" id="WP_011867077.1">
    <property type="nucleotide sequence ID" value="NC_009092.1"/>
</dbReference>
<dbReference type="SMR" id="A3QI49"/>
<dbReference type="STRING" id="323850.Shew_3281"/>
<dbReference type="KEGG" id="slo:Shew_3281"/>
<dbReference type="eggNOG" id="COG0359">
    <property type="taxonomic scope" value="Bacteria"/>
</dbReference>
<dbReference type="HOGENOM" id="CLU_078938_4_1_6"/>
<dbReference type="OrthoDB" id="9788336at2"/>
<dbReference type="Proteomes" id="UP000001558">
    <property type="component" value="Chromosome"/>
</dbReference>
<dbReference type="GO" id="GO:1990904">
    <property type="term" value="C:ribonucleoprotein complex"/>
    <property type="evidence" value="ECO:0007669"/>
    <property type="project" value="UniProtKB-KW"/>
</dbReference>
<dbReference type="GO" id="GO:0005840">
    <property type="term" value="C:ribosome"/>
    <property type="evidence" value="ECO:0007669"/>
    <property type="project" value="UniProtKB-KW"/>
</dbReference>
<dbReference type="GO" id="GO:0019843">
    <property type="term" value="F:rRNA binding"/>
    <property type="evidence" value="ECO:0007669"/>
    <property type="project" value="UniProtKB-UniRule"/>
</dbReference>
<dbReference type="GO" id="GO:0003735">
    <property type="term" value="F:structural constituent of ribosome"/>
    <property type="evidence" value="ECO:0007669"/>
    <property type="project" value="InterPro"/>
</dbReference>
<dbReference type="GO" id="GO:0006412">
    <property type="term" value="P:translation"/>
    <property type="evidence" value="ECO:0007669"/>
    <property type="project" value="UniProtKB-UniRule"/>
</dbReference>
<dbReference type="FunFam" id="3.10.430.100:FF:000001">
    <property type="entry name" value="50S ribosomal protein L9"/>
    <property type="match status" value="1"/>
</dbReference>
<dbReference type="FunFam" id="3.40.5.10:FF:000001">
    <property type="entry name" value="50S ribosomal protein L9"/>
    <property type="match status" value="1"/>
</dbReference>
<dbReference type="Gene3D" id="3.10.430.100">
    <property type="entry name" value="Ribosomal protein L9, C-terminal domain"/>
    <property type="match status" value="1"/>
</dbReference>
<dbReference type="Gene3D" id="3.40.5.10">
    <property type="entry name" value="Ribosomal protein L9, N-terminal domain"/>
    <property type="match status" value="1"/>
</dbReference>
<dbReference type="HAMAP" id="MF_00503">
    <property type="entry name" value="Ribosomal_bL9"/>
    <property type="match status" value="1"/>
</dbReference>
<dbReference type="InterPro" id="IPR000244">
    <property type="entry name" value="Ribosomal_bL9"/>
</dbReference>
<dbReference type="InterPro" id="IPR009027">
    <property type="entry name" value="Ribosomal_bL9/RNase_H1_N"/>
</dbReference>
<dbReference type="InterPro" id="IPR020594">
    <property type="entry name" value="Ribosomal_bL9_bac/chp"/>
</dbReference>
<dbReference type="InterPro" id="IPR020069">
    <property type="entry name" value="Ribosomal_bL9_C"/>
</dbReference>
<dbReference type="InterPro" id="IPR036791">
    <property type="entry name" value="Ribosomal_bL9_C_sf"/>
</dbReference>
<dbReference type="InterPro" id="IPR020070">
    <property type="entry name" value="Ribosomal_bL9_N"/>
</dbReference>
<dbReference type="InterPro" id="IPR036935">
    <property type="entry name" value="Ribosomal_bL9_N_sf"/>
</dbReference>
<dbReference type="NCBIfam" id="TIGR00158">
    <property type="entry name" value="L9"/>
    <property type="match status" value="1"/>
</dbReference>
<dbReference type="PANTHER" id="PTHR21368">
    <property type="entry name" value="50S RIBOSOMAL PROTEIN L9"/>
    <property type="match status" value="1"/>
</dbReference>
<dbReference type="Pfam" id="PF03948">
    <property type="entry name" value="Ribosomal_L9_C"/>
    <property type="match status" value="1"/>
</dbReference>
<dbReference type="Pfam" id="PF01281">
    <property type="entry name" value="Ribosomal_L9_N"/>
    <property type="match status" value="1"/>
</dbReference>
<dbReference type="SUPFAM" id="SSF55658">
    <property type="entry name" value="L9 N-domain-like"/>
    <property type="match status" value="1"/>
</dbReference>
<dbReference type="SUPFAM" id="SSF55653">
    <property type="entry name" value="Ribosomal protein L9 C-domain"/>
    <property type="match status" value="1"/>
</dbReference>
<dbReference type="PROSITE" id="PS00651">
    <property type="entry name" value="RIBOSOMAL_L9"/>
    <property type="match status" value="1"/>
</dbReference>
<comment type="function">
    <text evidence="1">Binds to the 23S rRNA.</text>
</comment>
<comment type="similarity">
    <text evidence="1">Belongs to the bacterial ribosomal protein bL9 family.</text>
</comment>
<proteinExistence type="inferred from homology"/>
<name>RL9_SHELP</name>
<accession>A3QI49</accession>
<reference key="1">
    <citation type="submission" date="2007-03" db="EMBL/GenBank/DDBJ databases">
        <title>Complete sequence of Shewanella loihica PV-4.</title>
        <authorList>
            <consortium name="US DOE Joint Genome Institute"/>
            <person name="Copeland A."/>
            <person name="Lucas S."/>
            <person name="Lapidus A."/>
            <person name="Barry K."/>
            <person name="Detter J.C."/>
            <person name="Glavina del Rio T."/>
            <person name="Hammon N."/>
            <person name="Israni S."/>
            <person name="Dalin E."/>
            <person name="Tice H."/>
            <person name="Pitluck S."/>
            <person name="Chain P."/>
            <person name="Malfatti S."/>
            <person name="Shin M."/>
            <person name="Vergez L."/>
            <person name="Schmutz J."/>
            <person name="Larimer F."/>
            <person name="Land M."/>
            <person name="Hauser L."/>
            <person name="Kyrpides N."/>
            <person name="Mikhailova N."/>
            <person name="Romine M.F."/>
            <person name="Serres G."/>
            <person name="Fredrickson J."/>
            <person name="Tiedje J."/>
            <person name="Richardson P."/>
        </authorList>
    </citation>
    <scope>NUCLEOTIDE SEQUENCE [LARGE SCALE GENOMIC DNA]</scope>
    <source>
        <strain>ATCC BAA-1088 / PV-4</strain>
    </source>
</reference>
<gene>
    <name evidence="1" type="primary">rplI</name>
    <name type="ordered locus">Shew_3281</name>
</gene>
<sequence length="150" mass="15635">MNVILLDKIANLGNLGDQVSVKAGYARNFLLPQGKAVVANAANTEVFEARRAELEAKLAAELATATERAEKLAALEAVVIASKAGDEGKLFGSIGNRDIADAVTAAGVELAKSEVRLPLGAIRATGEFEIDVQLHAEVKAVVKLSVVAED</sequence>